<reference key="1">
    <citation type="journal article" date="1995" name="Genomics">
        <title>Cloning and characterization of a murine SIL gene.</title>
        <authorList>
            <person name="Collazo-Garcia N."/>
            <person name="Scherer P."/>
            <person name="Aplan P.D."/>
        </authorList>
    </citation>
    <scope>NUCLEOTIDE SEQUENCE [MRNA]</scope>
    <scope>TISSUE SPECIFICITY</scope>
    <scope>FUNCTION</scope>
    <source>
        <strain>C57BL/6 X CBA</strain>
    </source>
</reference>
<reference key="2">
    <citation type="journal article" date="2001" name="Genome Res.">
        <title>Long-range comparison of human and mouse SCL loci: localized regions of sensitivity to restriction endonucleases correspond precisely with peaks of conserved noncoding sequences.</title>
        <authorList>
            <person name="Goettgens B."/>
            <person name="Gilbert J.G.R."/>
            <person name="Barton L.M."/>
            <person name="Grafham D."/>
            <person name="Rogers J."/>
            <person name="Bentley D.R."/>
            <person name="Green A.R."/>
        </authorList>
    </citation>
    <scope>NUCLEOTIDE SEQUENCE [GENOMIC DNA]</scope>
</reference>
<reference key="3">
    <citation type="journal article" date="2009" name="PLoS Biol.">
        <title>Lineage-specific biology revealed by a finished genome assembly of the mouse.</title>
        <authorList>
            <person name="Church D.M."/>
            <person name="Goodstadt L."/>
            <person name="Hillier L.W."/>
            <person name="Zody M.C."/>
            <person name="Goldstein S."/>
            <person name="She X."/>
            <person name="Bult C.J."/>
            <person name="Agarwala R."/>
            <person name="Cherry J.L."/>
            <person name="DiCuccio M."/>
            <person name="Hlavina W."/>
            <person name="Kapustin Y."/>
            <person name="Meric P."/>
            <person name="Maglott D."/>
            <person name="Birtle Z."/>
            <person name="Marques A.C."/>
            <person name="Graves T."/>
            <person name="Zhou S."/>
            <person name="Teague B."/>
            <person name="Potamousis K."/>
            <person name="Churas C."/>
            <person name="Place M."/>
            <person name="Herschleb J."/>
            <person name="Runnheim R."/>
            <person name="Forrest D."/>
            <person name="Amos-Landgraf J."/>
            <person name="Schwartz D.C."/>
            <person name="Cheng Z."/>
            <person name="Lindblad-Toh K."/>
            <person name="Eichler E.E."/>
            <person name="Ponting C.P."/>
        </authorList>
    </citation>
    <scope>NUCLEOTIDE SEQUENCE [LARGE SCALE GENOMIC DNA]</scope>
    <source>
        <strain>C57BL/6J</strain>
    </source>
</reference>
<reference key="4">
    <citation type="journal article" date="2005" name="Science">
        <title>The transcriptional landscape of the mammalian genome.</title>
        <authorList>
            <person name="Carninci P."/>
            <person name="Kasukawa T."/>
            <person name="Katayama S."/>
            <person name="Gough J."/>
            <person name="Frith M.C."/>
            <person name="Maeda N."/>
            <person name="Oyama R."/>
            <person name="Ravasi T."/>
            <person name="Lenhard B."/>
            <person name="Wells C."/>
            <person name="Kodzius R."/>
            <person name="Shimokawa K."/>
            <person name="Bajic V.B."/>
            <person name="Brenner S.E."/>
            <person name="Batalov S."/>
            <person name="Forrest A.R."/>
            <person name="Zavolan M."/>
            <person name="Davis M.J."/>
            <person name="Wilming L.G."/>
            <person name="Aidinis V."/>
            <person name="Allen J.E."/>
            <person name="Ambesi-Impiombato A."/>
            <person name="Apweiler R."/>
            <person name="Aturaliya R.N."/>
            <person name="Bailey T.L."/>
            <person name="Bansal M."/>
            <person name="Baxter L."/>
            <person name="Beisel K.W."/>
            <person name="Bersano T."/>
            <person name="Bono H."/>
            <person name="Chalk A.M."/>
            <person name="Chiu K.P."/>
            <person name="Choudhary V."/>
            <person name="Christoffels A."/>
            <person name="Clutterbuck D.R."/>
            <person name="Crowe M.L."/>
            <person name="Dalla E."/>
            <person name="Dalrymple B.P."/>
            <person name="de Bono B."/>
            <person name="Della Gatta G."/>
            <person name="di Bernardo D."/>
            <person name="Down T."/>
            <person name="Engstrom P."/>
            <person name="Fagiolini M."/>
            <person name="Faulkner G."/>
            <person name="Fletcher C.F."/>
            <person name="Fukushima T."/>
            <person name="Furuno M."/>
            <person name="Futaki S."/>
            <person name="Gariboldi M."/>
            <person name="Georgii-Hemming P."/>
            <person name="Gingeras T.R."/>
            <person name="Gojobori T."/>
            <person name="Green R.E."/>
            <person name="Gustincich S."/>
            <person name="Harbers M."/>
            <person name="Hayashi Y."/>
            <person name="Hensch T.K."/>
            <person name="Hirokawa N."/>
            <person name="Hill D."/>
            <person name="Huminiecki L."/>
            <person name="Iacono M."/>
            <person name="Ikeo K."/>
            <person name="Iwama A."/>
            <person name="Ishikawa T."/>
            <person name="Jakt M."/>
            <person name="Kanapin A."/>
            <person name="Katoh M."/>
            <person name="Kawasawa Y."/>
            <person name="Kelso J."/>
            <person name="Kitamura H."/>
            <person name="Kitano H."/>
            <person name="Kollias G."/>
            <person name="Krishnan S.P."/>
            <person name="Kruger A."/>
            <person name="Kummerfeld S.K."/>
            <person name="Kurochkin I.V."/>
            <person name="Lareau L.F."/>
            <person name="Lazarevic D."/>
            <person name="Lipovich L."/>
            <person name="Liu J."/>
            <person name="Liuni S."/>
            <person name="McWilliam S."/>
            <person name="Madan Babu M."/>
            <person name="Madera M."/>
            <person name="Marchionni L."/>
            <person name="Matsuda H."/>
            <person name="Matsuzawa S."/>
            <person name="Miki H."/>
            <person name="Mignone F."/>
            <person name="Miyake S."/>
            <person name="Morris K."/>
            <person name="Mottagui-Tabar S."/>
            <person name="Mulder N."/>
            <person name="Nakano N."/>
            <person name="Nakauchi H."/>
            <person name="Ng P."/>
            <person name="Nilsson R."/>
            <person name="Nishiguchi S."/>
            <person name="Nishikawa S."/>
            <person name="Nori F."/>
            <person name="Ohara O."/>
            <person name="Okazaki Y."/>
            <person name="Orlando V."/>
            <person name="Pang K.C."/>
            <person name="Pavan W.J."/>
            <person name="Pavesi G."/>
            <person name="Pesole G."/>
            <person name="Petrovsky N."/>
            <person name="Piazza S."/>
            <person name="Reed J."/>
            <person name="Reid J.F."/>
            <person name="Ring B.Z."/>
            <person name="Ringwald M."/>
            <person name="Rost B."/>
            <person name="Ruan Y."/>
            <person name="Salzberg S.L."/>
            <person name="Sandelin A."/>
            <person name="Schneider C."/>
            <person name="Schoenbach C."/>
            <person name="Sekiguchi K."/>
            <person name="Semple C.A."/>
            <person name="Seno S."/>
            <person name="Sessa L."/>
            <person name="Sheng Y."/>
            <person name="Shibata Y."/>
            <person name="Shimada H."/>
            <person name="Shimada K."/>
            <person name="Silva D."/>
            <person name="Sinclair B."/>
            <person name="Sperling S."/>
            <person name="Stupka E."/>
            <person name="Sugiura K."/>
            <person name="Sultana R."/>
            <person name="Takenaka Y."/>
            <person name="Taki K."/>
            <person name="Tammoja K."/>
            <person name="Tan S.L."/>
            <person name="Tang S."/>
            <person name="Taylor M.S."/>
            <person name="Tegner J."/>
            <person name="Teichmann S.A."/>
            <person name="Ueda H.R."/>
            <person name="van Nimwegen E."/>
            <person name="Verardo R."/>
            <person name="Wei C.L."/>
            <person name="Yagi K."/>
            <person name="Yamanishi H."/>
            <person name="Zabarovsky E."/>
            <person name="Zhu S."/>
            <person name="Zimmer A."/>
            <person name="Hide W."/>
            <person name="Bult C."/>
            <person name="Grimmond S.M."/>
            <person name="Teasdale R.D."/>
            <person name="Liu E.T."/>
            <person name="Brusic V."/>
            <person name="Quackenbush J."/>
            <person name="Wahlestedt C."/>
            <person name="Mattick J.S."/>
            <person name="Hume D.A."/>
            <person name="Kai C."/>
            <person name="Sasaki D."/>
            <person name="Tomaru Y."/>
            <person name="Fukuda S."/>
            <person name="Kanamori-Katayama M."/>
            <person name="Suzuki M."/>
            <person name="Aoki J."/>
            <person name="Arakawa T."/>
            <person name="Iida J."/>
            <person name="Imamura K."/>
            <person name="Itoh M."/>
            <person name="Kato T."/>
            <person name="Kawaji H."/>
            <person name="Kawagashira N."/>
            <person name="Kawashima T."/>
            <person name="Kojima M."/>
            <person name="Kondo S."/>
            <person name="Konno H."/>
            <person name="Nakano K."/>
            <person name="Ninomiya N."/>
            <person name="Nishio T."/>
            <person name="Okada M."/>
            <person name="Plessy C."/>
            <person name="Shibata K."/>
            <person name="Shiraki T."/>
            <person name="Suzuki S."/>
            <person name="Tagami M."/>
            <person name="Waki K."/>
            <person name="Watahiki A."/>
            <person name="Okamura-Oho Y."/>
            <person name="Suzuki H."/>
            <person name="Kawai J."/>
            <person name="Hayashizaki Y."/>
        </authorList>
    </citation>
    <scope>NUCLEOTIDE SEQUENCE [LARGE SCALE MRNA] OF 1-1094 AND 449-1262</scope>
    <source>
        <strain>C57BL/6J</strain>
        <tissue>Skin</tissue>
    </source>
</reference>
<reference key="5">
    <citation type="journal article" date="2004" name="Genome Res.">
        <title>The status, quality, and expansion of the NIH full-length cDNA project: the Mammalian Gene Collection (MGC).</title>
        <authorList>
            <consortium name="The MGC Project Team"/>
        </authorList>
    </citation>
    <scope>NUCLEOTIDE SEQUENCE [LARGE SCALE MRNA] OF 1-957 AND 1056-1262</scope>
    <source>
        <strain>Czech II</strain>
        <strain>FVB/N</strain>
        <tissue>Mammary gland</tissue>
    </source>
</reference>
<reference key="6">
    <citation type="journal article" date="1991" name="Mol. Cell. Biol.">
        <title>Structural characterization of SIL, a gene frequently disrupted in T-cell acute lymphoblastic leukemia.</title>
        <authorList>
            <person name="Aplan P.D."/>
            <person name="Lombardi D.P."/>
            <person name="Kirsch I.R."/>
        </authorList>
    </citation>
    <scope>TISSUE SPECIFICITY</scope>
</reference>
<reference key="7">
    <citation type="journal article" date="1999" name="Nature">
        <title>The SIL gene is required for mouse embryonic axial development and left-right specification.</title>
        <authorList>
            <person name="Izraeli S."/>
            <person name="Lowe L.A."/>
            <person name="Bertness V.L."/>
            <person name="Good D.J."/>
            <person name="Dorward D.W."/>
            <person name="Kirsch I.R."/>
            <person name="Kuehn M.R."/>
        </authorList>
    </citation>
    <scope>FUNCTION</scope>
    <scope>DISRUPTION PHENOTYPE</scope>
</reference>
<reference key="8">
    <citation type="journal article" date="2001" name="Genesis">
        <title>Genetic evidence that Sil is required for the Sonic Hedgehog response pathway.</title>
        <authorList>
            <person name="Izraeli S."/>
            <person name="Lowe L.A."/>
            <person name="Bertness V.L."/>
            <person name="Campaner S."/>
            <person name="Hahn H."/>
            <person name="Kirsch I.R."/>
            <person name="Kuehn M.R."/>
        </authorList>
    </citation>
    <scope>FUNCTION</scope>
</reference>
<reference key="9">
    <citation type="journal article" date="2005" name="Mol. Cell. Biol.">
        <title>Sil phosphorylation in a Pin1 binding domain affects the duration of the spindle checkpoint.</title>
        <authorList>
            <person name="Campaner S."/>
            <person name="Kaldis P."/>
            <person name="Izraeli S."/>
            <person name="Kirsch I.R."/>
        </authorList>
    </citation>
    <scope>INTERACTION WITH PIN1</scope>
    <scope>REGION</scope>
    <scope>MUTAGENESIS OF THR-574; SER-643; SER-656; SER-664; THR-686; SER-699 AND SER-760</scope>
    <scope>PHOSPHORYLATION</scope>
</reference>
<feature type="chain" id="PRO_0000271333" description="SCL-interrupting locus protein homolog">
    <location>
        <begin position="1"/>
        <end position="1262"/>
    </location>
</feature>
<feature type="region of interest" description="Interaction with RBM14" evidence="1">
    <location>
        <begin position="1"/>
        <end position="992"/>
    </location>
</feature>
<feature type="region of interest" description="Interaction with CPAP" evidence="1">
    <location>
        <begin position="220"/>
        <end position="762"/>
    </location>
</feature>
<feature type="region of interest" description="Disordered" evidence="2">
    <location>
        <begin position="369"/>
        <end position="409"/>
    </location>
</feature>
<feature type="region of interest" description="Disordered" evidence="2">
    <location>
        <begin position="454"/>
        <end position="551"/>
    </location>
</feature>
<feature type="region of interest" description="PIN1-binding">
    <location>
        <begin position="567"/>
        <end position="760"/>
    </location>
</feature>
<feature type="region of interest" description="Disordered" evidence="2">
    <location>
        <begin position="650"/>
        <end position="670"/>
    </location>
</feature>
<feature type="region of interest" description="Disordered" evidence="2">
    <location>
        <begin position="782"/>
        <end position="804"/>
    </location>
</feature>
<feature type="region of interest" description="Disordered" evidence="2">
    <location>
        <begin position="883"/>
        <end position="904"/>
    </location>
</feature>
<feature type="region of interest" description="Disordered" evidence="2">
    <location>
        <begin position="925"/>
        <end position="959"/>
    </location>
</feature>
<feature type="region of interest" description="Disordered" evidence="2">
    <location>
        <begin position="1106"/>
        <end position="1129"/>
    </location>
</feature>
<feature type="compositionally biased region" description="Polar residues" evidence="2">
    <location>
        <begin position="473"/>
        <end position="493"/>
    </location>
</feature>
<feature type="compositionally biased region" description="Polar residues" evidence="2">
    <location>
        <begin position="500"/>
        <end position="512"/>
    </location>
</feature>
<feature type="compositionally biased region" description="Polar residues" evidence="2">
    <location>
        <begin position="540"/>
        <end position="551"/>
    </location>
</feature>
<feature type="compositionally biased region" description="Basic and acidic residues" evidence="2">
    <location>
        <begin position="792"/>
        <end position="803"/>
    </location>
</feature>
<feature type="compositionally biased region" description="Polar residues" evidence="2">
    <location>
        <begin position="883"/>
        <end position="895"/>
    </location>
</feature>
<feature type="compositionally biased region" description="Basic residues" evidence="2">
    <location>
        <begin position="949"/>
        <end position="959"/>
    </location>
</feature>
<feature type="compositionally biased region" description="Basic and acidic residues" evidence="2">
    <location>
        <begin position="1116"/>
        <end position="1128"/>
    </location>
</feature>
<feature type="modified residue" description="Phosphoserine" evidence="1">
    <location>
        <position position="733"/>
    </location>
</feature>
<feature type="modified residue" description="Phosphoserine" evidence="1">
    <location>
        <position position="760"/>
    </location>
</feature>
<feature type="modified residue" description="Phosphoserine" evidence="1">
    <location>
        <position position="1110"/>
    </location>
</feature>
<feature type="mutagenesis site" description="Abolishes mitotic phosphorylation and decreases mitotic index as well as CDK1 activity; when associated with A-643; A-656; A-664; A-686; A-699 and A-760." evidence="5">
    <original>T</original>
    <variation>A</variation>
    <location>
        <position position="574"/>
    </location>
</feature>
<feature type="mutagenesis site" description="Abolishes mitotic phosphorylation and decreases mitotic index as well as CDK1 activity; when associated with A-574; A-656; A-664; A-686; A-699 and A-760." evidence="5">
    <original>S</original>
    <variation>A</variation>
    <location>
        <position position="643"/>
    </location>
</feature>
<feature type="mutagenesis site" description="Abolishes mitotic phosphorylation and decreases mitotic index as well as CDK1 activity; when associated with A-574; A-643; A-664; A-686; A-699 and A-760." evidence="5">
    <original>S</original>
    <variation>A</variation>
    <location>
        <position position="656"/>
    </location>
</feature>
<feature type="mutagenesis site" description="Abolishes mitotic phosphorylation and decreases mitotic index as well as CDK1 activity; when associated with A-574; A-643; A-656; A-686; A-699 and A-760." evidence="5">
    <original>S</original>
    <variation>A</variation>
    <location>
        <position position="664"/>
    </location>
</feature>
<feature type="mutagenesis site" description="Abolishes mitotic phosphorylation and decreases mitotic index as well as CDK1 activity; when associated with A-574; A-643; A-656; A-664; A-699 and A-760." evidence="5">
    <original>T</original>
    <variation>A</variation>
    <location>
        <position position="686"/>
    </location>
</feature>
<feature type="mutagenesis site" description="Abolishes mitotic phosphorylation and decreases mitotic index as well as CDK1 activity; when associated with A-574; A-643; A-656; A-664; A-686 and A-760." evidence="5">
    <original>S</original>
    <variation>A</variation>
    <location>
        <position position="699"/>
    </location>
</feature>
<feature type="mutagenesis site" description="Abolishes mitotic phosphorylation and decreases mitotic index as well as CDK1 activity; when associated with A-574; A-643; A-656; A-664; A-686 and A-699." evidence="5">
    <original>S</original>
    <variation>A</variation>
    <location>
        <position position="760"/>
    </location>
</feature>
<feature type="sequence conflict" description="In Ref. 1; AAC52386, 2; CAC14001 and 5; AAH49865." evidence="8" ref="1 2 5">
    <original>L</original>
    <variation>V</variation>
    <location>
        <position position="374"/>
    </location>
</feature>
<feature type="sequence conflict" description="In Ref. 4; BAC25593/BAC33619." evidence="8" ref="4">
    <original>T</original>
    <variation>M</variation>
    <location>
        <position position="686"/>
    </location>
</feature>
<feature type="sequence conflict" description="In Ref. 1; AAC52386, 2; CAC14001 and 5; AAH49865." evidence="8" ref="1 2 5">
    <original>V</original>
    <variation>M</variation>
    <location>
        <position position="740"/>
    </location>
</feature>
<feature type="sequence conflict" description="In Ref. 1; AAC52386, 2; CAC14001 and 5; AAH49865." evidence="8" ref="1 2 5">
    <original>K</original>
    <variation>R</variation>
    <location>
        <position position="748"/>
    </location>
</feature>
<feature type="sequence conflict" description="In Ref. 1; AAC52386, 2; CAC14001 and 5; AAH49865." evidence="8" ref="1 2 5">
    <original>R</original>
    <variation>H</variation>
    <location>
        <position position="942"/>
    </location>
</feature>
<feature type="sequence conflict" description="In Ref. 5; AAH04585." evidence="8" ref="5">
    <original>K</original>
    <variation>N</variation>
    <location>
        <position position="1060"/>
    </location>
</feature>
<feature type="sequence conflict" description="In Ref. 5; AAH04585." evidence="8" ref="5">
    <original>V</original>
    <variation>A</variation>
    <location>
        <position position="1137"/>
    </location>
</feature>
<feature type="sequence conflict" description="In Ref. 5; AAH04585." evidence="8" ref="5">
    <original>R</original>
    <variation>C</variation>
    <location>
        <position position="1164"/>
    </location>
</feature>
<comment type="function">
    <text evidence="1 3 4 7">Immediate-early gene. Plays an important role in embryonic development as well as in cellular growth and proliferation; its long-term silencing affects cell survival and cell cycle distribution as well as decreases CDK1 activity correlated with reduced phosphorylation of CDK1. Plays a role as a positive regulator of the sonic hedgehog pathway, acting downstream of PTCH1. Plays an important role in the regulation of centriole duplication. Required for the onset of procentriole formation and proper mitotic progression. During procentriole formation, is essential for the correct loading of SASS6 and CPAP to the base of the procentriole to initiate procentriole assembly (By similarity). In complex with STIL acts as a modulator of PLK4-driven cytoskeletal rearrangements and directional cell motility (By similarity).</text>
</comment>
<comment type="subunit">
    <text evidence="1 5">Homodimer (By similarity). Interacts with PIN1 via its WW domain. This interaction is dependent on Stil mitotic phosphorylation (PubMed:16024801). Interacts with CPAP. Interacts with RBM14 and this interaction interferes with the interaction of STIL with CPAP. Forms a complex with CPAP and SASS6 (By similarity). nteracts (via N-terminus) with CEP85; this interaction is essential for efficient centriolar targeting of STIL and subsequent PLK4 activation (By similarity).</text>
</comment>
<comment type="subcellular location">
    <subcellularLocation>
        <location evidence="8">Cytoplasm</location>
        <location evidence="8">Cytosol</location>
    </subcellularLocation>
    <subcellularLocation>
        <location evidence="1">Cytoplasm</location>
        <location evidence="1">Cytoskeleton</location>
        <location evidence="1">Microtubule organizing center</location>
        <location evidence="1">Centrosome</location>
        <location evidence="1">Centriole</location>
    </subcellularLocation>
    <subcellularLocation>
        <location evidence="1">Cytoplasm</location>
        <location evidence="1">Cell cortex</location>
    </subcellularLocation>
    <text evidence="1">Localizes at the leading edge.</text>
</comment>
<comment type="tissue specificity">
    <text evidence="6 7">Ubiquitously expressed in adult and fetal tissues. Highly expressed in hematopoietic tissues such as thymus, bone marrow and spleen.</text>
</comment>
<comment type="induction">
    <text>Down-regulated during cell terminal differentiation. Accumulates during G2 phase and falls at completion of the cell cycle.</text>
</comment>
<comment type="PTM">
    <text evidence="1">Ubiquitinated.</text>
</comment>
<comment type="PTM">
    <text evidence="9">Phosphorylated following the activation of the mitotic checkpoint.</text>
</comment>
<comment type="disruption phenotype">
    <text evidence="3">Death during embryonic development between days 8.5 and 10.5. Embryos are reduced in size and display delayed development. They have axial midline defects, and randomized cardiac looping. The midline sonic hedgehog signaling is blocked in these mice.</text>
</comment>
<comment type="sequence caution" evidence="8">
    <conflict type="frameshift">
        <sequence resource="EMBL-CDS" id="BAC25593"/>
    </conflict>
</comment>
<organism>
    <name type="scientific">Mus musculus</name>
    <name type="common">Mouse</name>
    <dbReference type="NCBI Taxonomy" id="10090"/>
    <lineage>
        <taxon>Eukaryota</taxon>
        <taxon>Metazoa</taxon>
        <taxon>Chordata</taxon>
        <taxon>Craniata</taxon>
        <taxon>Vertebrata</taxon>
        <taxon>Euteleostomi</taxon>
        <taxon>Mammalia</taxon>
        <taxon>Eutheria</taxon>
        <taxon>Euarchontoglires</taxon>
        <taxon>Glires</taxon>
        <taxon>Rodentia</taxon>
        <taxon>Myomorpha</taxon>
        <taxon>Muroidea</taxon>
        <taxon>Muridae</taxon>
        <taxon>Murinae</taxon>
        <taxon>Mus</taxon>
        <taxon>Mus</taxon>
    </lineage>
</organism>
<evidence type="ECO:0000250" key="1">
    <source>
        <dbReference type="UniProtKB" id="Q15468"/>
    </source>
</evidence>
<evidence type="ECO:0000256" key="2">
    <source>
        <dbReference type="SAM" id="MobiDB-lite"/>
    </source>
</evidence>
<evidence type="ECO:0000269" key="3">
    <source>
    </source>
</evidence>
<evidence type="ECO:0000269" key="4">
    <source>
    </source>
</evidence>
<evidence type="ECO:0000269" key="5">
    <source>
    </source>
</evidence>
<evidence type="ECO:0000269" key="6">
    <source>
    </source>
</evidence>
<evidence type="ECO:0000269" key="7">
    <source>
    </source>
</evidence>
<evidence type="ECO:0000305" key="8"/>
<evidence type="ECO:0000305" key="9">
    <source>
    </source>
</evidence>
<protein>
    <recommendedName>
        <fullName>SCL-interrupting locus protein homolog</fullName>
    </recommendedName>
</protein>
<sequence>MNTRFPSSKMVPFHFPPSKLALWNPMPIGECIYLHLSYYRKPKLMVTEKAIRLAYRHAKQNKKNVPCFLLGSLTVDEDEEGVTLTIDRFDPGREIPECLERTPTASLPGDFLIPCRVHIQGLGSRDVIVHNADDFSSALKALQYHVCSKDFLDCGKLLCLRAQITPRESLDGVDFNLQWTAVTLANSFKCVPVKPIPIIPTALARNLSSNLNISQVQGTYKHGYITMDETRKLLLLLQSDPKVSSLPLVGIWLAGIIHVYSPQVWACCLRYMFSSSIQERVFSESGNFIIVLYSLTHKEPEFYECLPCESRTPDLQFQLLTNKETLHLFNNVEPSGKNPIHFELSAESQDAEAEAEVLSKISKTLPVKRSSQKLSPGKIPINKHDTDLEDEDFSPRPIPSPHPVSQKISKVQPSVPELSLVLDNNFTESSNQSNPLEMMTVENPLLIKPSQPELCDAKHSSEATTGEPFRRGPTNQLSQDTALRQSRGKQSSTCKKESLQFRNTNAKPSLSVPSPDVAEKLQAVSAGSMQKEDYPVRPSTLDSRQPSLAPQAQPHNLVFSTHNSTRPMELQVPTPSLPSYYPTNVCSCCQHHGHIQYSTINSWQGNTVGSIQDLRSESLPKHAFFHSSGCPSLCPNAIYSSSSPVSMKQGGMGAYSPHSNGEPSPVAGPSHVDSCVPHPCAMCMHTPNTAPDNGMMGLSPDAYRFVTEQDRQLRLLQAQIQRLLEAQSLDPGSHKTVATVEDTVKAAKQMELVSMEAQSSPGLHMRKSVSIAVSTGASLFWNAAGDDQEPDSQPKQDDTKISSEDMNFSVDINNEATSLPGSASSLKAVDIPSFEESNLAVEEVNQPLPESNSSSEQSKEPGVPVFFPNALLAESVSMCLQTAPTEGASNSTELPQGTKDEPYRPSDNQKIYQDLLGQVNHLLSNASQETEEPPTKAVVTNRECAKTQNTHHARKKRHNSGLVDKDCVLSATIKQLRSLGVKIDSPTKVKKNEQKVDHASVLACISPEAVISGLNYMSFGNVGMSSLSPTGVDLSMEANAIALKYLSENQLSQLSLARSKQNNGDSSVGLLHINSDRSTVGLSLVSPSNMSFATKKYMKRYGLLQSSDNSEDEEEPPSHADSESDHVLNRNPACRPVQCGHEKEPSWNACEIAQCSDCGSADTRTDVPVLRNITNQAVQPRATEHLNEDSAISLRNLKPNPAMNLRTGKAEFTHHPEKENERDIAVFPGTLPSPETLKQMNSMDSVGTFLDVKRLRQLPKLF</sequence>
<name>STIL_MOUSE</name>
<accession>Q60988</accession>
<accession>A2AD39</accession>
<accession>Q80VK7</accession>
<accession>Q8C7U6</accession>
<accession>Q8CEL7</accession>
<accession>Q99KL4</accession>
<proteinExistence type="evidence at protein level"/>
<gene>
    <name type="primary">Stil</name>
    <name type="synonym">Sil</name>
</gene>
<dbReference type="EMBL" id="U36778">
    <property type="protein sequence ID" value="AAC52386.1"/>
    <property type="molecule type" value="mRNA"/>
</dbReference>
<dbReference type="EMBL" id="AJ297131">
    <property type="protein sequence ID" value="CAC14001.1"/>
    <property type="molecule type" value="Genomic_DNA"/>
</dbReference>
<dbReference type="EMBL" id="AK019471">
    <property type="protein sequence ID" value="BAC25593.1"/>
    <property type="status" value="ALT_FRAME"/>
    <property type="molecule type" value="mRNA"/>
</dbReference>
<dbReference type="EMBL" id="AK049223">
    <property type="protein sequence ID" value="BAC33619.1"/>
    <property type="molecule type" value="mRNA"/>
</dbReference>
<dbReference type="EMBL" id="AL670035">
    <property type="status" value="NOT_ANNOTATED_CDS"/>
    <property type="molecule type" value="Genomic_DNA"/>
</dbReference>
<dbReference type="EMBL" id="BC004585">
    <property type="protein sequence ID" value="AAH04585.1"/>
    <property type="molecule type" value="mRNA"/>
</dbReference>
<dbReference type="EMBL" id="BC049865">
    <property type="protein sequence ID" value="AAH49865.1"/>
    <property type="status" value="ALT_SEQ"/>
    <property type="molecule type" value="mRNA"/>
</dbReference>
<dbReference type="CCDS" id="CCDS18485.1"/>
<dbReference type="RefSeq" id="NP_033211.2">
    <property type="nucleotide sequence ID" value="NM_009185.3"/>
</dbReference>
<dbReference type="SMR" id="Q60988"/>
<dbReference type="BioGRID" id="203250">
    <property type="interactions" value="2"/>
</dbReference>
<dbReference type="ComplexPortal" id="CPX-1297">
    <property type="entry name" value="CPAP-STIL complex"/>
</dbReference>
<dbReference type="FunCoup" id="Q60988">
    <property type="interactions" value="912"/>
</dbReference>
<dbReference type="IntAct" id="Q60988">
    <property type="interactions" value="1"/>
</dbReference>
<dbReference type="MINT" id="Q60988"/>
<dbReference type="STRING" id="10090.ENSMUSP00000030490"/>
<dbReference type="iPTMnet" id="Q60988"/>
<dbReference type="PhosphoSitePlus" id="Q60988"/>
<dbReference type="jPOST" id="Q60988"/>
<dbReference type="PaxDb" id="10090-ENSMUSP00000030490"/>
<dbReference type="ProteomicsDB" id="254760"/>
<dbReference type="ProteomicsDB" id="324548"/>
<dbReference type="Antibodypedia" id="53510">
    <property type="antibodies" value="104 antibodies from 18 providers"/>
</dbReference>
<dbReference type="DNASU" id="20460"/>
<dbReference type="GeneID" id="20460"/>
<dbReference type="KEGG" id="mmu:20460"/>
<dbReference type="UCSC" id="uc008ueh.2">
    <property type="organism name" value="mouse"/>
</dbReference>
<dbReference type="AGR" id="MGI:107477"/>
<dbReference type="CTD" id="6491"/>
<dbReference type="MGI" id="MGI:107477">
    <property type="gene designation" value="Stil"/>
</dbReference>
<dbReference type="VEuPathDB" id="HostDB:ENSMUSG00000028718"/>
<dbReference type="eggNOG" id="ENOG502QVJ5">
    <property type="taxonomic scope" value="Eukaryota"/>
</dbReference>
<dbReference type="HOGENOM" id="CLU_007178_0_0_1"/>
<dbReference type="InParanoid" id="Q60988"/>
<dbReference type="OrthoDB" id="76173at2759"/>
<dbReference type="PhylomeDB" id="Q60988"/>
<dbReference type="TreeFam" id="TF331178"/>
<dbReference type="BioGRID-ORCS" id="20460">
    <property type="hits" value="20 hits in 82 CRISPR screens"/>
</dbReference>
<dbReference type="ChiTaRS" id="Stil">
    <property type="organism name" value="mouse"/>
</dbReference>
<dbReference type="PRO" id="PR:Q60988"/>
<dbReference type="Proteomes" id="UP000000589">
    <property type="component" value="Chromosome 4"/>
</dbReference>
<dbReference type="RNAct" id="Q60988">
    <property type="molecule type" value="protein"/>
</dbReference>
<dbReference type="Bgee" id="ENSMUSG00000028718">
    <property type="expression patterns" value="Expressed in undifferentiated genital tubercle and 151 other cell types or tissues"/>
</dbReference>
<dbReference type="GO" id="GO:0005938">
    <property type="term" value="C:cell cortex"/>
    <property type="evidence" value="ECO:0007669"/>
    <property type="project" value="UniProtKB-SubCell"/>
</dbReference>
<dbReference type="GO" id="GO:0005814">
    <property type="term" value="C:centriole"/>
    <property type="evidence" value="ECO:0000250"/>
    <property type="project" value="UniProtKB"/>
</dbReference>
<dbReference type="GO" id="GO:0005813">
    <property type="term" value="C:centrosome"/>
    <property type="evidence" value="ECO:0000266"/>
    <property type="project" value="MGI"/>
</dbReference>
<dbReference type="GO" id="GO:0005737">
    <property type="term" value="C:cytoplasm"/>
    <property type="evidence" value="ECO:0000266"/>
    <property type="project" value="MGI"/>
</dbReference>
<dbReference type="GO" id="GO:0005829">
    <property type="term" value="C:cytosol"/>
    <property type="evidence" value="ECO:0007669"/>
    <property type="project" value="UniProtKB-SubCell"/>
</dbReference>
<dbReference type="GO" id="GO:0120099">
    <property type="term" value="C:procentriole replication complex"/>
    <property type="evidence" value="ECO:0000266"/>
    <property type="project" value="ComplexPortal"/>
</dbReference>
<dbReference type="GO" id="GO:0006915">
    <property type="term" value="P:apoptotic process"/>
    <property type="evidence" value="ECO:0000315"/>
    <property type="project" value="MGI"/>
</dbReference>
<dbReference type="GO" id="GO:0051298">
    <property type="term" value="P:centrosome duplication"/>
    <property type="evidence" value="ECO:0000315"/>
    <property type="project" value="MGI"/>
</dbReference>
<dbReference type="GO" id="GO:0007368">
    <property type="term" value="P:determination of left/right symmetry"/>
    <property type="evidence" value="ECO:0000315"/>
    <property type="project" value="MGI"/>
</dbReference>
<dbReference type="GO" id="GO:0000578">
    <property type="term" value="P:embryonic axis specification"/>
    <property type="evidence" value="ECO:0000315"/>
    <property type="project" value="MGI"/>
</dbReference>
<dbReference type="GO" id="GO:0033504">
    <property type="term" value="P:floor plate development"/>
    <property type="evidence" value="ECO:0000315"/>
    <property type="project" value="MGI"/>
</dbReference>
<dbReference type="GO" id="GO:0030900">
    <property type="term" value="P:forebrain development"/>
    <property type="evidence" value="ECO:0000315"/>
    <property type="project" value="MGI"/>
</dbReference>
<dbReference type="GO" id="GO:0001947">
    <property type="term" value="P:heart looping"/>
    <property type="evidence" value="ECO:0000315"/>
    <property type="project" value="MGI"/>
</dbReference>
<dbReference type="GO" id="GO:0001701">
    <property type="term" value="P:in utero embryonic development"/>
    <property type="evidence" value="ECO:0000315"/>
    <property type="project" value="MGI"/>
</dbReference>
<dbReference type="GO" id="GO:0007052">
    <property type="term" value="P:mitotic spindle organization"/>
    <property type="evidence" value="ECO:0000266"/>
    <property type="project" value="MGI"/>
</dbReference>
<dbReference type="GO" id="GO:0035264">
    <property type="term" value="P:multicellular organism growth"/>
    <property type="evidence" value="ECO:0000315"/>
    <property type="project" value="MGI"/>
</dbReference>
<dbReference type="GO" id="GO:0043066">
    <property type="term" value="P:negative regulation of apoptotic process"/>
    <property type="evidence" value="ECO:0000315"/>
    <property type="project" value="MGI"/>
</dbReference>
<dbReference type="GO" id="GO:0001843">
    <property type="term" value="P:neural tube closure"/>
    <property type="evidence" value="ECO:0000315"/>
    <property type="project" value="MGI"/>
</dbReference>
<dbReference type="GO" id="GO:0021915">
    <property type="term" value="P:neural tube development"/>
    <property type="evidence" value="ECO:0000315"/>
    <property type="project" value="MGI"/>
</dbReference>
<dbReference type="GO" id="GO:1905515">
    <property type="term" value="P:non-motile cilium assembly"/>
    <property type="evidence" value="ECO:0000315"/>
    <property type="project" value="MGI"/>
</dbReference>
<dbReference type="GO" id="GO:0030903">
    <property type="term" value="P:notochord development"/>
    <property type="evidence" value="ECO:0000315"/>
    <property type="project" value="MGI"/>
</dbReference>
<dbReference type="GO" id="GO:0046601">
    <property type="term" value="P:positive regulation of centriole replication"/>
    <property type="evidence" value="ECO:0000266"/>
    <property type="project" value="ComplexPortal"/>
</dbReference>
<dbReference type="GO" id="GO:1900087">
    <property type="term" value="P:positive regulation of G1/S transition of mitotic cell cycle"/>
    <property type="evidence" value="ECO:0000266"/>
    <property type="project" value="ComplexPortal"/>
</dbReference>
<dbReference type="GO" id="GO:1905832">
    <property type="term" value="P:positive regulation of spindle assembly"/>
    <property type="evidence" value="ECO:0000303"/>
    <property type="project" value="ComplexPortal"/>
</dbReference>
<dbReference type="GO" id="GO:0071539">
    <property type="term" value="P:protein localization to centrosome"/>
    <property type="evidence" value="ECO:0000266"/>
    <property type="project" value="MGI"/>
</dbReference>
<dbReference type="GO" id="GO:0046599">
    <property type="term" value="P:regulation of centriole replication"/>
    <property type="evidence" value="ECO:0000250"/>
    <property type="project" value="UniProtKB"/>
</dbReference>
<dbReference type="GO" id="GO:0060236">
    <property type="term" value="P:regulation of mitotic spindle organization"/>
    <property type="evidence" value="ECO:0000303"/>
    <property type="project" value="ComplexPortal"/>
</dbReference>
<dbReference type="GO" id="GO:0007224">
    <property type="term" value="P:smoothened signaling pathway"/>
    <property type="evidence" value="ECO:0000315"/>
    <property type="project" value="MGI"/>
</dbReference>
<dbReference type="InterPro" id="IPR026123">
    <property type="entry name" value="Sil"/>
</dbReference>
<dbReference type="PANTHER" id="PTHR15128:SF0">
    <property type="entry name" value="SCL-INTERRUPTING LOCUS PROTEIN"/>
    <property type="match status" value="1"/>
</dbReference>
<dbReference type="PANTHER" id="PTHR15128">
    <property type="entry name" value="TAL1 SCL INTERRUPTING LOCUS"/>
    <property type="match status" value="1"/>
</dbReference>
<dbReference type="Pfam" id="PF15253">
    <property type="entry name" value="STIL_N"/>
    <property type="match status" value="1"/>
</dbReference>
<keyword id="KW-0963">Cytoplasm</keyword>
<keyword id="KW-0206">Cytoskeleton</keyword>
<keyword id="KW-0217">Developmental protein</keyword>
<keyword id="KW-0597">Phosphoprotein</keyword>
<keyword id="KW-1185">Reference proteome</keyword>
<keyword id="KW-0832">Ubl conjugation</keyword>